<dbReference type="EMBL" id="AK008797">
    <property type="protein sequence ID" value="BAB25901.1"/>
    <property type="molecule type" value="mRNA"/>
</dbReference>
<dbReference type="EMBL" id="AK011065">
    <property type="protein sequence ID" value="BAB27372.1"/>
    <property type="molecule type" value="mRNA"/>
</dbReference>
<dbReference type="EMBL" id="AK002558">
    <property type="status" value="NOT_ANNOTATED_CDS"/>
    <property type="molecule type" value="mRNA"/>
</dbReference>
<dbReference type="EMBL" id="BC003853">
    <property type="protein sequence ID" value="AAH03853.1"/>
    <property type="molecule type" value="mRNA"/>
</dbReference>
<dbReference type="EMBL" id="BC019725">
    <property type="protein sequence ID" value="AAH19725.1"/>
    <property type="molecule type" value="mRNA"/>
</dbReference>
<dbReference type="CCDS" id="CCDS37522.1"/>
<dbReference type="PIR" id="H59404">
    <property type="entry name" value="H59404"/>
</dbReference>
<dbReference type="RefSeq" id="NP_080239.1">
    <property type="nucleotide sequence ID" value="NM_025963.4"/>
</dbReference>
<dbReference type="PDB" id="7CPU">
    <property type="method" value="EM"/>
    <property type="resolution" value="2.82 A"/>
    <property type="chains" value="SK=1-165"/>
</dbReference>
<dbReference type="PDB" id="7CPV">
    <property type="method" value="EM"/>
    <property type="resolution" value="3.03 A"/>
    <property type="chains" value="SK=1-165"/>
</dbReference>
<dbReference type="PDB" id="7LS1">
    <property type="method" value="EM"/>
    <property type="resolution" value="3.30 A"/>
    <property type="chains" value="v2=1-165"/>
</dbReference>
<dbReference type="PDB" id="7LS2">
    <property type="method" value="EM"/>
    <property type="resolution" value="3.10 A"/>
    <property type="chains" value="v2=1-165"/>
</dbReference>
<dbReference type="PDBsum" id="7CPU"/>
<dbReference type="PDBsum" id="7CPV"/>
<dbReference type="PDBsum" id="7LS1"/>
<dbReference type="PDBsum" id="7LS2"/>
<dbReference type="EMDB" id="EMD-23500"/>
<dbReference type="EMDB" id="EMD-23501"/>
<dbReference type="EMDB" id="EMD-30432"/>
<dbReference type="EMDB" id="EMD-30433"/>
<dbReference type="SMR" id="P63325"/>
<dbReference type="BioGRID" id="211937">
    <property type="interactions" value="79"/>
</dbReference>
<dbReference type="ComplexPortal" id="CPX-5261">
    <property type="entry name" value="40S cytosolic small ribosomal subunit"/>
</dbReference>
<dbReference type="FunCoup" id="P63325">
    <property type="interactions" value="2427"/>
</dbReference>
<dbReference type="IntAct" id="P63325">
    <property type="interactions" value="1"/>
</dbReference>
<dbReference type="STRING" id="10090.ENSMUSP00000110532"/>
<dbReference type="GlyGen" id="P63325">
    <property type="glycosylation" value="1 site, 1 O-linked glycan (1 site)"/>
</dbReference>
<dbReference type="iPTMnet" id="P63325"/>
<dbReference type="MetOSite" id="P63325"/>
<dbReference type="PhosphoSitePlus" id="P63325"/>
<dbReference type="SwissPalm" id="P63325"/>
<dbReference type="CPTAC" id="non-CPTAC-4058"/>
<dbReference type="jPOST" id="P63325"/>
<dbReference type="PaxDb" id="10090-ENSMUSP00000110532"/>
<dbReference type="PeptideAtlas" id="P63325"/>
<dbReference type="ProteomicsDB" id="262709"/>
<dbReference type="Pumba" id="P63325"/>
<dbReference type="TopDownProteomics" id="P63325"/>
<dbReference type="DNASU" id="67097"/>
<dbReference type="Ensembl" id="ENSMUST00000114881.9">
    <property type="protein sequence ID" value="ENSMUSP00000110531.2"/>
    <property type="gene ID" value="ENSMUSG00000052146.17"/>
</dbReference>
<dbReference type="Ensembl" id="ENSMUST00000114882.9">
    <property type="protein sequence ID" value="ENSMUSP00000110532.2"/>
    <property type="gene ID" value="ENSMUSG00000052146.17"/>
</dbReference>
<dbReference type="Ensembl" id="ENSMUST00000178774.3">
    <property type="protein sequence ID" value="ENSMUSP00000136042.2"/>
    <property type="gene ID" value="ENSMUSG00000052146.17"/>
</dbReference>
<dbReference type="GeneID" id="67097"/>
<dbReference type="KEGG" id="mmu:67097"/>
<dbReference type="UCSC" id="uc008bph.1">
    <property type="organism name" value="mouse"/>
</dbReference>
<dbReference type="AGR" id="MGI:1914347"/>
<dbReference type="CTD" id="6204"/>
<dbReference type="MGI" id="MGI:1914347">
    <property type="gene designation" value="Rps10"/>
</dbReference>
<dbReference type="VEuPathDB" id="HostDB:ENSMUSG00000052146"/>
<dbReference type="eggNOG" id="KOG3344">
    <property type="taxonomic scope" value="Eukaryota"/>
</dbReference>
<dbReference type="GeneTree" id="ENSGT00440000034918"/>
<dbReference type="HOGENOM" id="CLU_089349_3_1_1"/>
<dbReference type="InParanoid" id="P63325"/>
<dbReference type="OMA" id="YRRRDQE"/>
<dbReference type="OrthoDB" id="38529at9989"/>
<dbReference type="PhylomeDB" id="P63325"/>
<dbReference type="TreeFam" id="TF319100"/>
<dbReference type="Reactome" id="R-MMU-156827">
    <property type="pathway name" value="L13a-mediated translational silencing of Ceruloplasmin expression"/>
</dbReference>
<dbReference type="Reactome" id="R-MMU-1799339">
    <property type="pathway name" value="SRP-dependent cotranslational protein targeting to membrane"/>
</dbReference>
<dbReference type="Reactome" id="R-MMU-6791226">
    <property type="pathway name" value="Major pathway of rRNA processing in the nucleolus and cytosol"/>
</dbReference>
<dbReference type="Reactome" id="R-MMU-72649">
    <property type="pathway name" value="Translation initiation complex formation"/>
</dbReference>
<dbReference type="Reactome" id="R-MMU-72689">
    <property type="pathway name" value="Formation of a pool of free 40S subunits"/>
</dbReference>
<dbReference type="Reactome" id="R-MMU-72695">
    <property type="pathway name" value="Formation of the ternary complex, and subsequently, the 43S complex"/>
</dbReference>
<dbReference type="Reactome" id="R-MMU-72702">
    <property type="pathway name" value="Ribosomal scanning and start codon recognition"/>
</dbReference>
<dbReference type="Reactome" id="R-MMU-72706">
    <property type="pathway name" value="GTP hydrolysis and joining of the 60S ribosomal subunit"/>
</dbReference>
<dbReference type="Reactome" id="R-MMU-975956">
    <property type="pathway name" value="Nonsense Mediated Decay (NMD) independent of the Exon Junction Complex (EJC)"/>
</dbReference>
<dbReference type="Reactome" id="R-MMU-975957">
    <property type="pathway name" value="Nonsense Mediated Decay (NMD) enhanced by the Exon Junction Complex (EJC)"/>
</dbReference>
<dbReference type="BioGRID-ORCS" id="67097">
    <property type="hits" value="23 hits in 76 CRISPR screens"/>
</dbReference>
<dbReference type="ChiTaRS" id="Rps10">
    <property type="organism name" value="mouse"/>
</dbReference>
<dbReference type="PRO" id="PR:P63325"/>
<dbReference type="Proteomes" id="UP000000589">
    <property type="component" value="Chromosome 17"/>
</dbReference>
<dbReference type="RNAct" id="P63325">
    <property type="molecule type" value="protein"/>
</dbReference>
<dbReference type="Bgee" id="ENSMUSG00000052146">
    <property type="expression patterns" value="Expressed in saccule of membranous labyrinth and 165 other cell types or tissues"/>
</dbReference>
<dbReference type="ExpressionAtlas" id="P63325">
    <property type="expression patterns" value="baseline and differential"/>
</dbReference>
<dbReference type="GO" id="GO:0005737">
    <property type="term" value="C:cytoplasm"/>
    <property type="evidence" value="ECO:0000303"/>
    <property type="project" value="ComplexPortal"/>
</dbReference>
<dbReference type="GO" id="GO:0005829">
    <property type="term" value="C:cytosol"/>
    <property type="evidence" value="ECO:0000304"/>
    <property type="project" value="Reactome"/>
</dbReference>
<dbReference type="GO" id="GO:0022627">
    <property type="term" value="C:cytosolic small ribosomal subunit"/>
    <property type="evidence" value="ECO:0000314"/>
    <property type="project" value="UniProtKB"/>
</dbReference>
<dbReference type="GO" id="GO:0005730">
    <property type="term" value="C:nucleolus"/>
    <property type="evidence" value="ECO:0000250"/>
    <property type="project" value="UniProtKB"/>
</dbReference>
<dbReference type="GO" id="GO:0098794">
    <property type="term" value="C:postsynapse"/>
    <property type="evidence" value="ECO:0000303"/>
    <property type="project" value="SynGO"/>
</dbReference>
<dbReference type="GO" id="GO:0098793">
    <property type="term" value="C:presynapse"/>
    <property type="evidence" value="ECO:0000303"/>
    <property type="project" value="SynGO"/>
</dbReference>
<dbReference type="GO" id="GO:0005840">
    <property type="term" value="C:ribosome"/>
    <property type="evidence" value="ECO:0000303"/>
    <property type="project" value="SynGO"/>
</dbReference>
<dbReference type="GO" id="GO:0045202">
    <property type="term" value="C:synapse"/>
    <property type="evidence" value="ECO:0000314"/>
    <property type="project" value="SynGO"/>
</dbReference>
<dbReference type="GO" id="GO:0003735">
    <property type="term" value="F:structural constituent of ribosome"/>
    <property type="evidence" value="ECO:0000314"/>
    <property type="project" value="UniProtKB"/>
</dbReference>
<dbReference type="GO" id="GO:0000049">
    <property type="term" value="F:tRNA binding"/>
    <property type="evidence" value="ECO:0007669"/>
    <property type="project" value="Ensembl"/>
</dbReference>
<dbReference type="GO" id="GO:0002181">
    <property type="term" value="P:cytoplasmic translation"/>
    <property type="evidence" value="ECO:0000303"/>
    <property type="project" value="ComplexPortal"/>
</dbReference>
<dbReference type="GO" id="GO:0000028">
    <property type="term" value="P:ribosomal small subunit assembly"/>
    <property type="evidence" value="ECO:0007669"/>
    <property type="project" value="Ensembl"/>
</dbReference>
<dbReference type="GO" id="GO:0140242">
    <property type="term" value="P:translation at postsynapse"/>
    <property type="evidence" value="ECO:0000303"/>
    <property type="project" value="SynGO"/>
</dbReference>
<dbReference type="GO" id="GO:0140236">
    <property type="term" value="P:translation at presynapse"/>
    <property type="evidence" value="ECO:0000303"/>
    <property type="project" value="SynGO"/>
</dbReference>
<dbReference type="FunFam" id="1.10.10.10:FF:001335">
    <property type="entry name" value="40S ribosomal protein S10"/>
    <property type="match status" value="1"/>
</dbReference>
<dbReference type="Gene3D" id="1.10.10.10">
    <property type="entry name" value="Winged helix-like DNA-binding domain superfamily/Winged helix DNA-binding domain"/>
    <property type="match status" value="1"/>
</dbReference>
<dbReference type="InterPro" id="IPR005326">
    <property type="entry name" value="Plectin_eS10_N"/>
</dbReference>
<dbReference type="InterPro" id="IPR037447">
    <property type="entry name" value="Ribosomal_eS10"/>
</dbReference>
<dbReference type="InterPro" id="IPR036388">
    <property type="entry name" value="WH-like_DNA-bd_sf"/>
</dbReference>
<dbReference type="PANTHER" id="PTHR12146">
    <property type="entry name" value="40S RIBOSOMAL PROTEIN S10"/>
    <property type="match status" value="1"/>
</dbReference>
<dbReference type="PANTHER" id="PTHR12146:SF10">
    <property type="entry name" value="SMALL RIBOSOMAL SUBUNIT PROTEIN ES10"/>
    <property type="match status" value="1"/>
</dbReference>
<dbReference type="Pfam" id="PF03501">
    <property type="entry name" value="S10_plectin"/>
    <property type="match status" value="1"/>
</dbReference>
<protein>
    <recommendedName>
        <fullName evidence="4">Small ribosomal subunit protein eS10</fullName>
    </recommendedName>
    <alternativeName>
        <fullName>40S ribosomal protein S10</fullName>
    </alternativeName>
</protein>
<organism>
    <name type="scientific">Mus musculus</name>
    <name type="common">Mouse</name>
    <dbReference type="NCBI Taxonomy" id="10090"/>
    <lineage>
        <taxon>Eukaryota</taxon>
        <taxon>Metazoa</taxon>
        <taxon>Chordata</taxon>
        <taxon>Craniata</taxon>
        <taxon>Vertebrata</taxon>
        <taxon>Euteleostomi</taxon>
        <taxon>Mammalia</taxon>
        <taxon>Eutheria</taxon>
        <taxon>Euarchontoglires</taxon>
        <taxon>Glires</taxon>
        <taxon>Rodentia</taxon>
        <taxon>Myomorpha</taxon>
        <taxon>Muroidea</taxon>
        <taxon>Muridae</taxon>
        <taxon>Murinae</taxon>
        <taxon>Mus</taxon>
        <taxon>Mus</taxon>
    </lineage>
</organism>
<reference key="1">
    <citation type="journal article" date="2005" name="Science">
        <title>The transcriptional landscape of the mammalian genome.</title>
        <authorList>
            <person name="Carninci P."/>
            <person name="Kasukawa T."/>
            <person name="Katayama S."/>
            <person name="Gough J."/>
            <person name="Frith M.C."/>
            <person name="Maeda N."/>
            <person name="Oyama R."/>
            <person name="Ravasi T."/>
            <person name="Lenhard B."/>
            <person name="Wells C."/>
            <person name="Kodzius R."/>
            <person name="Shimokawa K."/>
            <person name="Bajic V.B."/>
            <person name="Brenner S.E."/>
            <person name="Batalov S."/>
            <person name="Forrest A.R."/>
            <person name="Zavolan M."/>
            <person name="Davis M.J."/>
            <person name="Wilming L.G."/>
            <person name="Aidinis V."/>
            <person name="Allen J.E."/>
            <person name="Ambesi-Impiombato A."/>
            <person name="Apweiler R."/>
            <person name="Aturaliya R.N."/>
            <person name="Bailey T.L."/>
            <person name="Bansal M."/>
            <person name="Baxter L."/>
            <person name="Beisel K.W."/>
            <person name="Bersano T."/>
            <person name="Bono H."/>
            <person name="Chalk A.M."/>
            <person name="Chiu K.P."/>
            <person name="Choudhary V."/>
            <person name="Christoffels A."/>
            <person name="Clutterbuck D.R."/>
            <person name="Crowe M.L."/>
            <person name="Dalla E."/>
            <person name="Dalrymple B.P."/>
            <person name="de Bono B."/>
            <person name="Della Gatta G."/>
            <person name="di Bernardo D."/>
            <person name="Down T."/>
            <person name="Engstrom P."/>
            <person name="Fagiolini M."/>
            <person name="Faulkner G."/>
            <person name="Fletcher C.F."/>
            <person name="Fukushima T."/>
            <person name="Furuno M."/>
            <person name="Futaki S."/>
            <person name="Gariboldi M."/>
            <person name="Georgii-Hemming P."/>
            <person name="Gingeras T.R."/>
            <person name="Gojobori T."/>
            <person name="Green R.E."/>
            <person name="Gustincich S."/>
            <person name="Harbers M."/>
            <person name="Hayashi Y."/>
            <person name="Hensch T.K."/>
            <person name="Hirokawa N."/>
            <person name="Hill D."/>
            <person name="Huminiecki L."/>
            <person name="Iacono M."/>
            <person name="Ikeo K."/>
            <person name="Iwama A."/>
            <person name="Ishikawa T."/>
            <person name="Jakt M."/>
            <person name="Kanapin A."/>
            <person name="Katoh M."/>
            <person name="Kawasawa Y."/>
            <person name="Kelso J."/>
            <person name="Kitamura H."/>
            <person name="Kitano H."/>
            <person name="Kollias G."/>
            <person name="Krishnan S.P."/>
            <person name="Kruger A."/>
            <person name="Kummerfeld S.K."/>
            <person name="Kurochkin I.V."/>
            <person name="Lareau L.F."/>
            <person name="Lazarevic D."/>
            <person name="Lipovich L."/>
            <person name="Liu J."/>
            <person name="Liuni S."/>
            <person name="McWilliam S."/>
            <person name="Madan Babu M."/>
            <person name="Madera M."/>
            <person name="Marchionni L."/>
            <person name="Matsuda H."/>
            <person name="Matsuzawa S."/>
            <person name="Miki H."/>
            <person name="Mignone F."/>
            <person name="Miyake S."/>
            <person name="Morris K."/>
            <person name="Mottagui-Tabar S."/>
            <person name="Mulder N."/>
            <person name="Nakano N."/>
            <person name="Nakauchi H."/>
            <person name="Ng P."/>
            <person name="Nilsson R."/>
            <person name="Nishiguchi S."/>
            <person name="Nishikawa S."/>
            <person name="Nori F."/>
            <person name="Ohara O."/>
            <person name="Okazaki Y."/>
            <person name="Orlando V."/>
            <person name="Pang K.C."/>
            <person name="Pavan W.J."/>
            <person name="Pavesi G."/>
            <person name="Pesole G."/>
            <person name="Petrovsky N."/>
            <person name="Piazza S."/>
            <person name="Reed J."/>
            <person name="Reid J.F."/>
            <person name="Ring B.Z."/>
            <person name="Ringwald M."/>
            <person name="Rost B."/>
            <person name="Ruan Y."/>
            <person name="Salzberg S.L."/>
            <person name="Sandelin A."/>
            <person name="Schneider C."/>
            <person name="Schoenbach C."/>
            <person name="Sekiguchi K."/>
            <person name="Semple C.A."/>
            <person name="Seno S."/>
            <person name="Sessa L."/>
            <person name="Sheng Y."/>
            <person name="Shibata Y."/>
            <person name="Shimada H."/>
            <person name="Shimada K."/>
            <person name="Silva D."/>
            <person name="Sinclair B."/>
            <person name="Sperling S."/>
            <person name="Stupka E."/>
            <person name="Sugiura K."/>
            <person name="Sultana R."/>
            <person name="Takenaka Y."/>
            <person name="Taki K."/>
            <person name="Tammoja K."/>
            <person name="Tan S.L."/>
            <person name="Tang S."/>
            <person name="Taylor M.S."/>
            <person name="Tegner J."/>
            <person name="Teichmann S.A."/>
            <person name="Ueda H.R."/>
            <person name="van Nimwegen E."/>
            <person name="Verardo R."/>
            <person name="Wei C.L."/>
            <person name="Yagi K."/>
            <person name="Yamanishi H."/>
            <person name="Zabarovsky E."/>
            <person name="Zhu S."/>
            <person name="Zimmer A."/>
            <person name="Hide W."/>
            <person name="Bult C."/>
            <person name="Grimmond S.M."/>
            <person name="Teasdale R.D."/>
            <person name="Liu E.T."/>
            <person name="Brusic V."/>
            <person name="Quackenbush J."/>
            <person name="Wahlestedt C."/>
            <person name="Mattick J.S."/>
            <person name="Hume D.A."/>
            <person name="Kai C."/>
            <person name="Sasaki D."/>
            <person name="Tomaru Y."/>
            <person name="Fukuda S."/>
            <person name="Kanamori-Katayama M."/>
            <person name="Suzuki M."/>
            <person name="Aoki J."/>
            <person name="Arakawa T."/>
            <person name="Iida J."/>
            <person name="Imamura K."/>
            <person name="Itoh M."/>
            <person name="Kato T."/>
            <person name="Kawaji H."/>
            <person name="Kawagashira N."/>
            <person name="Kawashima T."/>
            <person name="Kojima M."/>
            <person name="Kondo S."/>
            <person name="Konno H."/>
            <person name="Nakano K."/>
            <person name="Ninomiya N."/>
            <person name="Nishio T."/>
            <person name="Okada M."/>
            <person name="Plessy C."/>
            <person name="Shibata K."/>
            <person name="Shiraki T."/>
            <person name="Suzuki S."/>
            <person name="Tagami M."/>
            <person name="Waki K."/>
            <person name="Watahiki A."/>
            <person name="Okamura-Oho Y."/>
            <person name="Suzuki H."/>
            <person name="Kawai J."/>
            <person name="Hayashizaki Y."/>
        </authorList>
    </citation>
    <scope>NUCLEOTIDE SEQUENCE [LARGE SCALE MRNA]</scope>
    <source>
        <strain>C57BL/6J</strain>
        <tissue>Kidney</tissue>
        <tissue>Liver</tissue>
        <tissue>Stomach</tissue>
    </source>
</reference>
<reference key="2">
    <citation type="journal article" date="2004" name="Genome Res.">
        <title>The status, quality, and expansion of the NIH full-length cDNA project: the Mammalian Gene Collection (MGC).</title>
        <authorList>
            <consortium name="The MGC Project Team"/>
        </authorList>
    </citation>
    <scope>NUCLEOTIDE SEQUENCE [LARGE SCALE MRNA]</scope>
    <source>
        <strain>FVB/N</strain>
        <tissue>Mammary gland</tissue>
    </source>
</reference>
<reference key="3">
    <citation type="journal article" date="2004" name="Mol. Cell. Proteomics">
        <title>Phosphoproteomic analysis of the developing mouse brain.</title>
        <authorList>
            <person name="Ballif B.A."/>
            <person name="Villen J."/>
            <person name="Beausoleil S.A."/>
            <person name="Schwartz D."/>
            <person name="Gygi S.P."/>
        </authorList>
    </citation>
    <scope>IDENTIFICATION BY MASS SPECTROMETRY [LARGE SCALE ANALYSIS]</scope>
    <source>
        <tissue>Embryonic brain</tissue>
    </source>
</reference>
<reference key="4">
    <citation type="journal article" date="2007" name="J. Immunol.">
        <title>Quantitative time-resolved phosphoproteomic analysis of mast cell signaling.</title>
        <authorList>
            <person name="Cao L."/>
            <person name="Yu K."/>
            <person name="Banh C."/>
            <person name="Nguyen V."/>
            <person name="Ritz A."/>
            <person name="Raphael B.J."/>
            <person name="Kawakami Y."/>
            <person name="Kawakami T."/>
            <person name="Salomon A.R."/>
        </authorList>
    </citation>
    <scope>PHOSPHORYLATION [LARGE SCALE ANALYSIS] AT TYR-12</scope>
    <scope>IDENTIFICATION BY MASS SPECTROMETRY [LARGE SCALE ANALYSIS]</scope>
    <source>
        <tissue>Mast cell</tissue>
    </source>
</reference>
<reference key="5">
    <citation type="journal article" date="2007" name="Proc. Natl. Acad. Sci. U.S.A.">
        <title>Large-scale phosphorylation analysis of mouse liver.</title>
        <authorList>
            <person name="Villen J."/>
            <person name="Beausoleil S.A."/>
            <person name="Gerber S.A."/>
            <person name="Gygi S.P."/>
        </authorList>
    </citation>
    <scope>PHOSPHORYLATION [LARGE SCALE ANALYSIS] AT SER-146</scope>
    <scope>IDENTIFICATION BY MASS SPECTROMETRY [LARGE SCALE ANALYSIS]</scope>
    <source>
        <tissue>Liver</tissue>
    </source>
</reference>
<reference key="6">
    <citation type="journal article" date="2010" name="Cell">
        <title>A tissue-specific atlas of mouse protein phosphorylation and expression.</title>
        <authorList>
            <person name="Huttlin E.L."/>
            <person name="Jedrychowski M.P."/>
            <person name="Elias J.E."/>
            <person name="Goswami T."/>
            <person name="Rad R."/>
            <person name="Beausoleil S.A."/>
            <person name="Villen J."/>
            <person name="Haas W."/>
            <person name="Sowa M.E."/>
            <person name="Gygi S.P."/>
        </authorList>
    </citation>
    <scope>PHOSPHORYLATION [LARGE SCALE ANALYSIS] AT TYR-12 AND SER-146</scope>
    <scope>IDENTIFICATION BY MASS SPECTROMETRY [LARGE SCALE ANALYSIS]</scope>
    <source>
        <tissue>Brain</tissue>
        <tissue>Brown adipose tissue</tissue>
        <tissue>Heart</tissue>
        <tissue>Kidney</tissue>
        <tissue>Liver</tissue>
        <tissue>Lung</tissue>
        <tissue>Pancreas</tissue>
        <tissue>Spleen</tissue>
        <tissue>Testis</tissue>
    </source>
</reference>
<reference key="7">
    <citation type="journal article" date="2014" name="Mol. Cell. Proteomics">
        <title>Immunoaffinity enrichment and mass spectrometry analysis of protein methylation.</title>
        <authorList>
            <person name="Guo A."/>
            <person name="Gu H."/>
            <person name="Zhou J."/>
            <person name="Mulhern D."/>
            <person name="Wang Y."/>
            <person name="Lee K.A."/>
            <person name="Yang V."/>
            <person name="Aguiar M."/>
            <person name="Kornhauser J."/>
            <person name="Jia X."/>
            <person name="Ren J."/>
            <person name="Beausoleil S.A."/>
            <person name="Silva J.C."/>
            <person name="Vemulapalli V."/>
            <person name="Bedford M.T."/>
            <person name="Comb M.J."/>
        </authorList>
    </citation>
    <scope>METHYLATION [LARGE SCALE ANALYSIS] AT ARG-153</scope>
    <scope>IDENTIFICATION BY MASS SPECTROMETRY [LARGE SCALE ANALYSIS]</scope>
    <source>
        <tissue>Brain</tissue>
        <tissue>Embryo</tissue>
    </source>
</reference>
<reference evidence="5 6" key="8">
    <citation type="journal article" date="2022" name="Nature">
        <title>A male germ-cell-specific ribosome controls male fertility.</title>
        <authorList>
            <person name="Li H."/>
            <person name="Huo Y."/>
            <person name="He X."/>
            <person name="Yao L."/>
            <person name="Zhang H."/>
            <person name="Cui Y."/>
            <person name="Xiao H."/>
            <person name="Xie W."/>
            <person name="Zhang D."/>
            <person name="Wang Y."/>
            <person name="Zhang S."/>
            <person name="Tu H."/>
            <person name="Cheng Y."/>
            <person name="Guo Y."/>
            <person name="Cao X."/>
            <person name="Zhu Y."/>
            <person name="Jiang T."/>
            <person name="Guo X."/>
            <person name="Qin Y."/>
            <person name="Sha J."/>
        </authorList>
    </citation>
    <scope>STRUCTURE BY ELECTRON MICROSCOPY (3.03 ANGSTROMS) OF RIBOSOME</scope>
    <scope>FUNCTION</scope>
    <scope>SUBUNIT</scope>
    <scope>SUBCELLULAR LOCATION</scope>
</reference>
<proteinExistence type="evidence at protein level"/>
<name>RS10_MOUSE</name>
<keyword id="KW-0002">3D-structure</keyword>
<keyword id="KW-0963">Cytoplasm</keyword>
<keyword id="KW-1017">Isopeptide bond</keyword>
<keyword id="KW-0488">Methylation</keyword>
<keyword id="KW-0539">Nucleus</keyword>
<keyword id="KW-0597">Phosphoprotein</keyword>
<keyword id="KW-1185">Reference proteome</keyword>
<keyword id="KW-0687">Ribonucleoprotein</keyword>
<keyword id="KW-0689">Ribosomal protein</keyword>
<keyword id="KW-0832">Ubl conjugation</keyword>
<feature type="chain" id="PRO_0000116361" description="Small ribosomal subunit protein eS10">
    <location>
        <begin position="1"/>
        <end position="165"/>
    </location>
</feature>
<feature type="region of interest" description="Disordered" evidence="2">
    <location>
        <begin position="90"/>
        <end position="165"/>
    </location>
</feature>
<feature type="compositionally biased region" description="Basic and acidic residues" evidence="2">
    <location>
        <begin position="97"/>
        <end position="128"/>
    </location>
</feature>
<feature type="compositionally biased region" description="Gly residues" evidence="2">
    <location>
        <begin position="154"/>
        <end position="165"/>
    </location>
</feature>
<feature type="modified residue" description="Phosphotyrosine" evidence="8 9">
    <location>
        <position position="12"/>
    </location>
</feature>
<feature type="modified residue" description="Phosphoserine" evidence="7 9">
    <location>
        <position position="146"/>
    </location>
</feature>
<feature type="modified residue" description="Omega-N-methylarginine" evidence="10">
    <location>
        <position position="153"/>
    </location>
</feature>
<feature type="modified residue" description="Symmetric dimethylarginine" evidence="1">
    <location>
        <position position="158"/>
    </location>
</feature>
<feature type="modified residue" description="Symmetric dimethylarginine" evidence="1">
    <location>
        <position position="160"/>
    </location>
</feature>
<feature type="cross-link" description="Glycyl lysine isopeptide (Lys-Gly) (interchain with G-Cter in ubiquitin)" evidence="1">
    <location>
        <position position="138"/>
    </location>
</feature>
<feature type="cross-link" description="Glycyl lysine isopeptide (Lys-Gly) (interchain with G-Cter in ubiquitin)" evidence="1">
    <location>
        <position position="139"/>
    </location>
</feature>
<comment type="function">
    <text evidence="3">Component of the 40S ribosomal subunit (PubMed:36517592). The ribosome is a large ribonucleoprotein complex responsible for the synthesis of proteins in the cell (PubMed:36517592).</text>
</comment>
<comment type="subunit">
    <text evidence="1 3">Component of the small ribosomal subunit (PubMed:36517592). The methylated form interacts with NPM1 (By similarity).</text>
</comment>
<comment type="subcellular location">
    <subcellularLocation>
        <location evidence="3">Cytoplasm</location>
    </subcellularLocation>
    <subcellularLocation>
        <location evidence="1">Nucleus</location>
        <location evidence="1">Nucleolus</location>
    </subcellularLocation>
    <text evidence="1">Localized in the granular component (GC) region of the nucleolus. Methylation is required for its localization in the GC region. Colocalizes with NPS1 in the GC region of the nucleolus (By similarity).</text>
</comment>
<comment type="PTM">
    <text evidence="1">Methylated by PRMT5. Methylation is necessary for its interaction with NPS1, its localization in the granular component (GC) region of the nucleolus, for the proper assembly of ribosomes, protein synthesis and optimal cell proliferation.</text>
</comment>
<comment type="PTM">
    <text evidence="1">Monoubiquitinated by ZNF598 when a ribosome has stalled during translation of poly(A) sequences, leading to preclude synthesis of a long poly-lysine tail and initiate the ribosome quality control (RQC) pathway to degrade the potentially detrimental aberrant nascent polypeptide. Deubiquitinated by OTUD3 and USP21, antagonizing ZNF598 activity. Deubiquitinated by OTUD1, antagonizing ZNF598 activity and stimulating formation of polysomes: deubiquitination by OTUD1 promotes stability and translation of a subset mRNAs with a high abundance of rare codons can limit the translation rate. Deubiquitinated by USP10.</text>
</comment>
<comment type="similarity">
    <text evidence="4">Belongs to the eukaryotic ribosomal protein eS10 family.</text>
</comment>
<sequence length="165" mass="18916">MLMPKKNRIAIYELLFKEGVMVAKKDVHMPKHPELADKNVPNLHVMKAMQSLKSRGYVKEQFAWRHFYWYLTNEGIQYLRDYLHLPPEIVPATLRRSRPETGRPRPKGPEGERPARFTRGEADRDTYRRSAVPPGADKKAEAGAGSATEFQFRGGFGRGRGQPPQ</sequence>
<evidence type="ECO:0000250" key="1">
    <source>
        <dbReference type="UniProtKB" id="P46783"/>
    </source>
</evidence>
<evidence type="ECO:0000256" key="2">
    <source>
        <dbReference type="SAM" id="MobiDB-lite"/>
    </source>
</evidence>
<evidence type="ECO:0000269" key="3">
    <source>
    </source>
</evidence>
<evidence type="ECO:0000305" key="4"/>
<evidence type="ECO:0007744" key="5">
    <source>
        <dbReference type="PDB" id="7CPU"/>
    </source>
</evidence>
<evidence type="ECO:0007744" key="6">
    <source>
        <dbReference type="PDB" id="7CPV"/>
    </source>
</evidence>
<evidence type="ECO:0007744" key="7">
    <source>
    </source>
</evidence>
<evidence type="ECO:0007744" key="8">
    <source>
    </source>
</evidence>
<evidence type="ECO:0007744" key="9">
    <source>
    </source>
</evidence>
<evidence type="ECO:0007744" key="10">
    <source>
    </source>
</evidence>
<gene>
    <name type="primary">Rps10</name>
</gene>
<accession>P63325</accession>
<accession>P09900</accession>
<accession>Q9DCR5</accession>